<reference key="1">
    <citation type="submission" date="2007-07" db="EMBL/GenBank/DDBJ databases">
        <title>Complete sequence of chromosome of Shewanella baltica OS185.</title>
        <authorList>
            <consortium name="US DOE Joint Genome Institute"/>
            <person name="Copeland A."/>
            <person name="Lucas S."/>
            <person name="Lapidus A."/>
            <person name="Barry K."/>
            <person name="Glavina del Rio T."/>
            <person name="Dalin E."/>
            <person name="Tice H."/>
            <person name="Pitluck S."/>
            <person name="Sims D."/>
            <person name="Brettin T."/>
            <person name="Bruce D."/>
            <person name="Detter J.C."/>
            <person name="Han C."/>
            <person name="Schmutz J."/>
            <person name="Larimer F."/>
            <person name="Land M."/>
            <person name="Hauser L."/>
            <person name="Kyrpides N."/>
            <person name="Mikhailova N."/>
            <person name="Brettar I."/>
            <person name="Rodrigues J."/>
            <person name="Konstantinidis K."/>
            <person name="Tiedje J."/>
            <person name="Richardson P."/>
        </authorList>
    </citation>
    <scope>NUCLEOTIDE SEQUENCE [LARGE SCALE GENOMIC DNA]</scope>
    <source>
        <strain>OS185</strain>
    </source>
</reference>
<gene>
    <name evidence="1" type="primary">dapF</name>
    <name type="ordered locus">Shew185_3973</name>
</gene>
<feature type="chain" id="PRO_1000011961" description="Diaminopimelate epimerase">
    <location>
        <begin position="1"/>
        <end position="275"/>
    </location>
</feature>
<feature type="active site" description="Proton donor" evidence="1">
    <location>
        <position position="74"/>
    </location>
</feature>
<feature type="active site" description="Proton acceptor" evidence="1">
    <location>
        <position position="218"/>
    </location>
</feature>
<feature type="binding site" evidence="1">
    <location>
        <position position="12"/>
    </location>
    <ligand>
        <name>substrate</name>
    </ligand>
</feature>
<feature type="binding site" evidence="1">
    <location>
        <position position="45"/>
    </location>
    <ligand>
        <name>substrate</name>
    </ligand>
</feature>
<feature type="binding site" evidence="1">
    <location>
        <position position="65"/>
    </location>
    <ligand>
        <name>substrate</name>
    </ligand>
</feature>
<feature type="binding site" evidence="1">
    <location>
        <begin position="75"/>
        <end position="76"/>
    </location>
    <ligand>
        <name>substrate</name>
    </ligand>
</feature>
<feature type="binding site" evidence="1">
    <location>
        <position position="158"/>
    </location>
    <ligand>
        <name>substrate</name>
    </ligand>
</feature>
<feature type="binding site" evidence="1">
    <location>
        <position position="191"/>
    </location>
    <ligand>
        <name>substrate</name>
    </ligand>
</feature>
<feature type="binding site" evidence="1">
    <location>
        <begin position="209"/>
        <end position="210"/>
    </location>
    <ligand>
        <name>substrate</name>
    </ligand>
</feature>
<feature type="binding site" evidence="1">
    <location>
        <begin position="219"/>
        <end position="220"/>
    </location>
    <ligand>
        <name>substrate</name>
    </ligand>
</feature>
<feature type="site" description="Could be important to modulate the pK values of the two catalytic cysteine residues" evidence="1">
    <location>
        <position position="160"/>
    </location>
</feature>
<feature type="site" description="Could be important to modulate the pK values of the two catalytic cysteine residues" evidence="1">
    <location>
        <position position="209"/>
    </location>
</feature>
<feature type="site" description="Important for dimerization" evidence="1">
    <location>
        <position position="269"/>
    </location>
</feature>
<keyword id="KW-0028">Amino-acid biosynthesis</keyword>
<keyword id="KW-0963">Cytoplasm</keyword>
<keyword id="KW-0413">Isomerase</keyword>
<keyword id="KW-0457">Lysine biosynthesis</keyword>
<proteinExistence type="inferred from homology"/>
<comment type="function">
    <text evidence="1">Catalyzes the stereoinversion of LL-2,6-diaminopimelate (L,L-DAP) to meso-diaminopimelate (meso-DAP), a precursor of L-lysine and an essential component of the bacterial peptidoglycan.</text>
</comment>
<comment type="catalytic activity">
    <reaction evidence="1">
        <text>(2S,6S)-2,6-diaminopimelate = meso-2,6-diaminopimelate</text>
        <dbReference type="Rhea" id="RHEA:15393"/>
        <dbReference type="ChEBI" id="CHEBI:57609"/>
        <dbReference type="ChEBI" id="CHEBI:57791"/>
        <dbReference type="EC" id="5.1.1.7"/>
    </reaction>
</comment>
<comment type="pathway">
    <text evidence="1">Amino-acid biosynthesis; L-lysine biosynthesis via DAP pathway; DL-2,6-diaminopimelate from LL-2,6-diaminopimelate: step 1/1.</text>
</comment>
<comment type="subunit">
    <text evidence="1">Homodimer.</text>
</comment>
<comment type="subcellular location">
    <subcellularLocation>
        <location evidence="1">Cytoplasm</location>
    </subcellularLocation>
</comment>
<comment type="similarity">
    <text evidence="1">Belongs to the diaminopimelate epimerase family.</text>
</comment>
<organism>
    <name type="scientific">Shewanella baltica (strain OS185)</name>
    <dbReference type="NCBI Taxonomy" id="402882"/>
    <lineage>
        <taxon>Bacteria</taxon>
        <taxon>Pseudomonadati</taxon>
        <taxon>Pseudomonadota</taxon>
        <taxon>Gammaproteobacteria</taxon>
        <taxon>Alteromonadales</taxon>
        <taxon>Shewanellaceae</taxon>
        <taxon>Shewanella</taxon>
    </lineage>
</organism>
<protein>
    <recommendedName>
        <fullName evidence="1">Diaminopimelate epimerase</fullName>
        <shortName evidence="1">DAP epimerase</shortName>
        <ecNumber evidence="1">5.1.1.7</ecNumber>
    </recommendedName>
    <alternativeName>
        <fullName evidence="1">PLP-independent amino acid racemase</fullName>
    </alternativeName>
</protein>
<evidence type="ECO:0000255" key="1">
    <source>
        <dbReference type="HAMAP-Rule" id="MF_00197"/>
    </source>
</evidence>
<accession>A6WTF5</accession>
<sequence>MIQFTKMHGLGNDFMVVDGVTQNVFFSPEQIRRLADRNFGIGFDQLLLVEPPYDPDLDFHYRIFNADGTEVEQCGNGARCFARFVRNKGLTNKSKIRVSTSSGKMTLRLERDGTVTVNMGVPILEPSQIPFKAKKPEKTYLLQTPMQTFLCGAASMGNPHCVLDVEDVASASVAEIGAMLTKHERFPRGVNVGFMQVVDSGHIKLRVYERGAAETLACGTGACAAVVVGQVQGKLGQQVRVDLPGGTLTINWEGEGKPLWMTGPAQHVYDGQIQL</sequence>
<dbReference type="EC" id="5.1.1.7" evidence="1"/>
<dbReference type="EMBL" id="CP000753">
    <property type="protein sequence ID" value="ABS10094.1"/>
    <property type="molecule type" value="Genomic_DNA"/>
</dbReference>
<dbReference type="RefSeq" id="WP_006083422.1">
    <property type="nucleotide sequence ID" value="NC_009665.1"/>
</dbReference>
<dbReference type="SMR" id="A6WTF5"/>
<dbReference type="GeneID" id="11775013"/>
<dbReference type="KEGG" id="sbm:Shew185_3973"/>
<dbReference type="HOGENOM" id="CLU_053306_1_1_6"/>
<dbReference type="UniPathway" id="UPA00034">
    <property type="reaction ID" value="UER00025"/>
</dbReference>
<dbReference type="GO" id="GO:0005829">
    <property type="term" value="C:cytosol"/>
    <property type="evidence" value="ECO:0007669"/>
    <property type="project" value="TreeGrafter"/>
</dbReference>
<dbReference type="GO" id="GO:0008837">
    <property type="term" value="F:diaminopimelate epimerase activity"/>
    <property type="evidence" value="ECO:0007669"/>
    <property type="project" value="UniProtKB-UniRule"/>
</dbReference>
<dbReference type="GO" id="GO:0009089">
    <property type="term" value="P:lysine biosynthetic process via diaminopimelate"/>
    <property type="evidence" value="ECO:0007669"/>
    <property type="project" value="UniProtKB-UniRule"/>
</dbReference>
<dbReference type="FunFam" id="3.10.310.10:FF:000001">
    <property type="entry name" value="Diaminopimelate epimerase"/>
    <property type="match status" value="1"/>
</dbReference>
<dbReference type="FunFam" id="3.10.310.10:FF:000002">
    <property type="entry name" value="Diaminopimelate epimerase"/>
    <property type="match status" value="1"/>
</dbReference>
<dbReference type="Gene3D" id="3.10.310.10">
    <property type="entry name" value="Diaminopimelate Epimerase, Chain A, domain 1"/>
    <property type="match status" value="2"/>
</dbReference>
<dbReference type="HAMAP" id="MF_00197">
    <property type="entry name" value="DAP_epimerase"/>
    <property type="match status" value="1"/>
</dbReference>
<dbReference type="InterPro" id="IPR018510">
    <property type="entry name" value="DAP_epimerase_AS"/>
</dbReference>
<dbReference type="InterPro" id="IPR001653">
    <property type="entry name" value="DAP_epimerase_DapF"/>
</dbReference>
<dbReference type="NCBIfam" id="TIGR00652">
    <property type="entry name" value="DapF"/>
    <property type="match status" value="1"/>
</dbReference>
<dbReference type="PANTHER" id="PTHR31689:SF0">
    <property type="entry name" value="DIAMINOPIMELATE EPIMERASE"/>
    <property type="match status" value="1"/>
</dbReference>
<dbReference type="PANTHER" id="PTHR31689">
    <property type="entry name" value="DIAMINOPIMELATE EPIMERASE, CHLOROPLASTIC"/>
    <property type="match status" value="1"/>
</dbReference>
<dbReference type="Pfam" id="PF01678">
    <property type="entry name" value="DAP_epimerase"/>
    <property type="match status" value="2"/>
</dbReference>
<dbReference type="SUPFAM" id="SSF54506">
    <property type="entry name" value="Diaminopimelate epimerase-like"/>
    <property type="match status" value="1"/>
</dbReference>
<dbReference type="PROSITE" id="PS01326">
    <property type="entry name" value="DAP_EPIMERASE"/>
    <property type="match status" value="1"/>
</dbReference>
<name>DAPF_SHEB8</name>